<sequence>MAGLNVSLSFFFATFTLCEAARRASKALLPVGAYEVFAREAMRTLVELGPWAGDFGPDLLLTLLFLLFLAHGVTLDGASANPTVSLQEFLMAEESLPGTLLKLAAQGLGMQAACTLTRLCWAWELSDLHLLQSLMAQSCSSALRTSVPHGALVEAACAFCFHLTLLHLRHSPPAYSGPAVALLVTVTAYTAGPFTSAFFNPALAASVTFACSGHTLLEYVQVYWLGPLTGMVLAVLLHQGRLPHLFQRNLFYGQKNKYRAPRGKPAPASGDTQTPAKGSSVREPGRSGVEGPHSS</sequence>
<feature type="chain" id="PRO_0000328826" description="Putative aquaporin-12B">
    <location>
        <begin position="1"/>
        <end position="295"/>
    </location>
</feature>
<feature type="topological domain" description="Cytoplasmic" evidence="5">
    <location>
        <begin position="1"/>
        <end position="22"/>
    </location>
</feature>
<feature type="transmembrane region" description="Helical; Name=1" evidence="1">
    <location>
        <begin position="23"/>
        <end position="41"/>
    </location>
</feature>
<feature type="topological domain" description="Extracellular" evidence="5">
    <location>
        <begin position="42"/>
        <end position="55"/>
    </location>
</feature>
<feature type="transmembrane region" description="Helical; Name=2" evidence="1">
    <location>
        <begin position="56"/>
        <end position="74"/>
    </location>
</feature>
<feature type="topological domain" description="Cytoplasmic" evidence="5">
    <location>
        <begin position="75"/>
        <end position="76"/>
    </location>
</feature>
<feature type="intramembrane region" description="Discontinuously helical" evidence="1">
    <location>
        <begin position="77"/>
        <end position="114"/>
    </location>
</feature>
<feature type="topological domain" description="Cytoplasmic" evidence="5">
    <location>
        <begin position="115"/>
        <end position="120"/>
    </location>
</feature>
<feature type="transmembrane region" description="Helical; Name=3" evidence="1">
    <location>
        <begin position="121"/>
        <end position="142"/>
    </location>
</feature>
<feature type="topological domain" description="Extracellular" evidence="5">
    <location>
        <begin position="143"/>
        <end position="145"/>
    </location>
</feature>
<feature type="transmembrane region" description="Helical; Name=3" evidence="1">
    <location>
        <begin position="146"/>
        <end position="166"/>
    </location>
</feature>
<feature type="topological domain" description="Cytoplasmic" evidence="5">
    <location>
        <begin position="167"/>
        <end position="174"/>
    </location>
</feature>
<feature type="transmembrane region" description="Helical; Name=5" evidence="1">
    <location>
        <begin position="175"/>
        <end position="191"/>
    </location>
</feature>
<feature type="topological domain" description="Extracellular" evidence="5">
    <location>
        <begin position="192"/>
        <end position="194"/>
    </location>
</feature>
<feature type="intramembrane region" description="Discontinuously helical" evidence="1">
    <location>
        <begin position="195"/>
        <end position="206"/>
    </location>
</feature>
<feature type="topological domain" description="Extracellular" evidence="5">
    <location>
        <begin position="207"/>
        <end position="223"/>
    </location>
</feature>
<feature type="transmembrane region" description="Helical; Name=6" evidence="1">
    <location>
        <begin position="224"/>
        <end position="244"/>
    </location>
</feature>
<feature type="topological domain" description="Cytoplasmic" evidence="5">
    <location>
        <begin position="245"/>
        <end position="295"/>
    </location>
</feature>
<feature type="region of interest" description="Disordered" evidence="3">
    <location>
        <begin position="257"/>
        <end position="295"/>
    </location>
</feature>
<feature type="short sequence motif" description="NPA 1" evidence="1">
    <location>
        <begin position="81"/>
        <end position="83"/>
    </location>
</feature>
<feature type="short sequence motif" description="NPA 2" evidence="1">
    <location>
        <begin position="200"/>
        <end position="202"/>
    </location>
</feature>
<feature type="splice variant" id="VSP_032800" description="In isoform 2." evidence="4">
    <original>A</original>
    <variation>AVGAVQLGACFLE</variation>
    <location>
        <position position="41"/>
    </location>
</feature>
<name>AQ12B_HUMAN</name>
<organism>
    <name type="scientific">Homo sapiens</name>
    <name type="common">Human</name>
    <dbReference type="NCBI Taxonomy" id="9606"/>
    <lineage>
        <taxon>Eukaryota</taxon>
        <taxon>Metazoa</taxon>
        <taxon>Chordata</taxon>
        <taxon>Craniata</taxon>
        <taxon>Vertebrata</taxon>
        <taxon>Euteleostomi</taxon>
        <taxon>Mammalia</taxon>
        <taxon>Eutheria</taxon>
        <taxon>Euarchontoglires</taxon>
        <taxon>Primates</taxon>
        <taxon>Haplorrhini</taxon>
        <taxon>Catarrhini</taxon>
        <taxon>Hominidae</taxon>
        <taxon>Homo</taxon>
    </lineage>
</organism>
<dbReference type="EMBL" id="AC011298">
    <property type="status" value="NOT_ANNOTATED_CDS"/>
    <property type="molecule type" value="Genomic_DNA"/>
</dbReference>
<dbReference type="EMBL" id="BC139748">
    <property type="protein sequence ID" value="AAI39749.1"/>
    <property type="molecule type" value="mRNA"/>
</dbReference>
<dbReference type="CCDS" id="CCDS46560.1">
    <molecule id="A6NM10-2"/>
</dbReference>
<dbReference type="RefSeq" id="NP_001095937.1">
    <molecule id="A6NM10-2"/>
    <property type="nucleotide sequence ID" value="NM_001102467.2"/>
</dbReference>
<dbReference type="SMR" id="A6NM10"/>
<dbReference type="BioGRID" id="575779">
    <property type="interactions" value="53"/>
</dbReference>
<dbReference type="FunCoup" id="A6NM10">
    <property type="interactions" value="10"/>
</dbReference>
<dbReference type="IntAct" id="A6NM10">
    <property type="interactions" value="39"/>
</dbReference>
<dbReference type="STRING" id="9606.ENSP00000384894"/>
<dbReference type="iPTMnet" id="A6NM10"/>
<dbReference type="BioMuta" id="AQP12B"/>
<dbReference type="MassIVE" id="A6NM10"/>
<dbReference type="PaxDb" id="9606-ENSP00000384894"/>
<dbReference type="PeptideAtlas" id="A6NM10"/>
<dbReference type="ProteomicsDB" id="1503">
    <molecule id="A6NM10-1"/>
</dbReference>
<dbReference type="ProteomicsDB" id="1504">
    <molecule id="A6NM10-2"/>
</dbReference>
<dbReference type="Antibodypedia" id="67379">
    <property type="antibodies" value="59 antibodies from 9 providers"/>
</dbReference>
<dbReference type="DNASU" id="653437"/>
<dbReference type="Ensembl" id="ENST00000407834.4">
    <molecule id="A6NM10-2"/>
    <property type="protein sequence ID" value="ENSP00000384894.3"/>
    <property type="gene ID" value="ENSG00000185176.13"/>
</dbReference>
<dbReference type="Ensembl" id="ENST00000621682.4">
    <molecule id="A6NM10-1"/>
    <property type="protein sequence ID" value="ENSP00000481577.1"/>
    <property type="gene ID" value="ENSG00000185176.13"/>
</dbReference>
<dbReference type="GeneID" id="653437"/>
<dbReference type="KEGG" id="hsa:653437"/>
<dbReference type="MANE-Select" id="ENST00000407834.4">
    <molecule id="A6NM10-2"/>
    <property type="protein sequence ID" value="ENSP00000384894.3"/>
    <property type="RefSeq nucleotide sequence ID" value="NM_001102467.2"/>
    <property type="RefSeq protein sequence ID" value="NP_001095937.1"/>
</dbReference>
<dbReference type="UCSC" id="uc010fzj.4">
    <molecule id="A6NM10-1"/>
    <property type="organism name" value="human"/>
</dbReference>
<dbReference type="AGR" id="HGNC:6096"/>
<dbReference type="CTD" id="653437"/>
<dbReference type="GeneCards" id="AQP12B"/>
<dbReference type="HGNC" id="HGNC:6096">
    <property type="gene designation" value="AQP12B"/>
</dbReference>
<dbReference type="HPA" id="ENSG00000185176">
    <property type="expression patterns" value="Tissue enriched (pancreas)"/>
</dbReference>
<dbReference type="neXtProt" id="NX_A6NM10"/>
<dbReference type="OpenTargets" id="ENSG00000185176"/>
<dbReference type="PharmGKB" id="PA29902"/>
<dbReference type="VEuPathDB" id="HostDB:ENSG00000185176"/>
<dbReference type="eggNOG" id="ENOG502RYFD">
    <property type="taxonomic scope" value="Eukaryota"/>
</dbReference>
<dbReference type="GeneTree" id="ENSGT00530000063816"/>
<dbReference type="HOGENOM" id="CLU_074449_3_0_1"/>
<dbReference type="InParanoid" id="A6NM10"/>
<dbReference type="OMA" id="MIKNLMA"/>
<dbReference type="OrthoDB" id="1580043at2759"/>
<dbReference type="PAN-GO" id="A6NM10">
    <property type="GO annotations" value="2 GO annotations based on evolutionary models"/>
</dbReference>
<dbReference type="PhylomeDB" id="A6NM10"/>
<dbReference type="TreeFam" id="TF320251"/>
<dbReference type="PathwayCommons" id="A6NM10"/>
<dbReference type="BioGRID-ORCS" id="653437">
    <property type="hits" value="22 hits in 1036 CRISPR screens"/>
</dbReference>
<dbReference type="GenomeRNAi" id="653437"/>
<dbReference type="Pharos" id="A6NM10">
    <property type="development level" value="Tdark"/>
</dbReference>
<dbReference type="PRO" id="PR:A6NM10"/>
<dbReference type="Proteomes" id="UP000005640">
    <property type="component" value="Chromosome 2"/>
</dbReference>
<dbReference type="RNAct" id="A6NM10">
    <property type="molecule type" value="protein"/>
</dbReference>
<dbReference type="Bgee" id="ENSG00000185176">
    <property type="expression patterns" value="Expressed in body of pancreas and 60 other cell types or tissues"/>
</dbReference>
<dbReference type="ExpressionAtlas" id="A6NM10">
    <property type="expression patterns" value="baseline and differential"/>
</dbReference>
<dbReference type="GO" id="GO:0005737">
    <property type="term" value="C:cytoplasm"/>
    <property type="evidence" value="ECO:0000318"/>
    <property type="project" value="GO_Central"/>
</dbReference>
<dbReference type="GO" id="GO:0016020">
    <property type="term" value="C:membrane"/>
    <property type="evidence" value="ECO:0007669"/>
    <property type="project" value="UniProtKB-SubCell"/>
</dbReference>
<dbReference type="GO" id="GO:0015267">
    <property type="term" value="F:channel activity"/>
    <property type="evidence" value="ECO:0000318"/>
    <property type="project" value="GO_Central"/>
</dbReference>
<dbReference type="GO" id="GO:0015250">
    <property type="term" value="F:water channel activity"/>
    <property type="evidence" value="ECO:0007669"/>
    <property type="project" value="UniProtKB-ARBA"/>
</dbReference>
<dbReference type="FunFam" id="1.20.1080.10:FF:000018">
    <property type="entry name" value="Aquaporin"/>
    <property type="match status" value="1"/>
</dbReference>
<dbReference type="Gene3D" id="1.20.1080.10">
    <property type="entry name" value="Glycerol uptake facilitator protein"/>
    <property type="match status" value="1"/>
</dbReference>
<dbReference type="InterPro" id="IPR051883">
    <property type="entry name" value="AQP11/12_channel"/>
</dbReference>
<dbReference type="InterPro" id="IPR023271">
    <property type="entry name" value="Aquaporin-like"/>
</dbReference>
<dbReference type="InterPro" id="IPR016697">
    <property type="entry name" value="Aquaporin_11/12"/>
</dbReference>
<dbReference type="InterPro" id="IPR023265">
    <property type="entry name" value="Aquaporin_12"/>
</dbReference>
<dbReference type="InterPro" id="IPR000425">
    <property type="entry name" value="MIP"/>
</dbReference>
<dbReference type="PANTHER" id="PTHR21191">
    <property type="entry name" value="AQUAPORIN"/>
    <property type="match status" value="1"/>
</dbReference>
<dbReference type="PANTHER" id="PTHR21191:SF8">
    <property type="entry name" value="AQUAPORIN-12A-RELATED"/>
    <property type="match status" value="1"/>
</dbReference>
<dbReference type="Pfam" id="PF00230">
    <property type="entry name" value="MIP"/>
    <property type="match status" value="1"/>
</dbReference>
<dbReference type="PIRSF" id="PIRSF017529">
    <property type="entry name" value="Aquaporin_11/12"/>
    <property type="match status" value="1"/>
</dbReference>
<dbReference type="PRINTS" id="PR02025">
    <property type="entry name" value="AQUAPORIN12"/>
</dbReference>
<dbReference type="PRINTS" id="PR00783">
    <property type="entry name" value="MINTRINSICP"/>
</dbReference>
<dbReference type="SUPFAM" id="SSF81338">
    <property type="entry name" value="Aquaporin-like"/>
    <property type="match status" value="1"/>
</dbReference>
<accession>A6NM10</accession>
<accession>A4QPB9</accession>
<protein>
    <recommendedName>
        <fullName evidence="5">Putative aquaporin-12B</fullName>
        <shortName evidence="5">AQP-12B</shortName>
    </recommendedName>
</protein>
<gene>
    <name evidence="6" type="primary">AQP12B</name>
    <name evidence="6" type="synonym">INSSA3</name>
</gene>
<comment type="function">
    <text evidence="1">Putative aquaporin. Could form homotetrameric transmembrane channels, with each monomer independently mediating water transport across the plasma membrane along its osmotic gradient.</text>
</comment>
<comment type="catalytic activity">
    <reaction evidence="1">
        <text>H2O(in) = H2O(out)</text>
        <dbReference type="Rhea" id="RHEA:29667"/>
        <dbReference type="ChEBI" id="CHEBI:15377"/>
    </reaction>
</comment>
<comment type="subunit">
    <text evidence="1">Homotetramer; each monomer provides an independent water pore.</text>
</comment>
<comment type="interaction">
    <interactant intactId="EBI-17265552">
        <id>A6NM10-2</id>
    </interactant>
    <interactant intactId="EBI-1754287">
        <id>Q9NRZ5</id>
        <label>AGPAT4</label>
    </interactant>
    <organismsDiffer>false</organismsDiffer>
    <experiments>3</experiments>
</comment>
<comment type="interaction">
    <interactant intactId="EBI-17265552">
        <id>A6NM10-2</id>
    </interactant>
    <interactant intactId="EBI-12200293">
        <id>P0DN84</id>
        <label>STRIT1</label>
    </interactant>
    <organismsDiffer>false</organismsDiffer>
    <experiments>3</experiments>
</comment>
<comment type="interaction">
    <interactant intactId="EBI-17265552">
        <id>A6NM10-2</id>
    </interactant>
    <interactant intactId="EBI-12111910">
        <id>Q5BJF2</id>
        <label>TMEM97</label>
    </interactant>
    <organismsDiffer>false</organismsDiffer>
    <experiments>3</experiments>
</comment>
<comment type="interaction">
    <interactant intactId="EBI-17265552">
        <id>A6NM10-2</id>
    </interactant>
    <interactant intactId="EBI-11988865">
        <id>A5PKU2</id>
        <label>TUSC5</label>
    </interactant>
    <organismsDiffer>false</organismsDiffer>
    <experiments>3</experiments>
</comment>
<comment type="subcellular location">
    <subcellularLocation>
        <location evidence="2">Membrane</location>
        <topology evidence="2">Multi-pass membrane protein</topology>
    </subcellularLocation>
</comment>
<comment type="alternative products">
    <event type="alternative splicing"/>
    <isoform>
        <id>A6NM10-1</id>
        <name>1</name>
        <sequence type="displayed"/>
    </isoform>
    <isoform>
        <id>A6NM10-2</id>
        <name>2</name>
        <sequence type="described" ref="VSP_032800"/>
    </isoform>
</comment>
<comment type="domain">
    <text evidence="1">Aquaporins contain two tandem repeats each containing three membrane-spanning domains and a pore-forming loop with the signature motif Asn-Pro-Ala (NPA).</text>
</comment>
<comment type="similarity">
    <text evidence="5">Belongs to the MIP/aquaporin (TC 1.A.8) family. AQP11/AQP12 subfamily.</text>
</comment>
<keyword id="KW-0025">Alternative splicing</keyword>
<keyword id="KW-0472">Membrane</keyword>
<keyword id="KW-1267">Proteomics identification</keyword>
<keyword id="KW-1185">Reference proteome</keyword>
<keyword id="KW-0677">Repeat</keyword>
<keyword id="KW-0812">Transmembrane</keyword>
<keyword id="KW-1133">Transmembrane helix</keyword>
<keyword id="KW-0813">Transport</keyword>
<reference key="1">
    <citation type="journal article" date="2005" name="Nature">
        <title>Generation and annotation of the DNA sequences of human chromosomes 2 and 4.</title>
        <authorList>
            <person name="Hillier L.W."/>
            <person name="Graves T.A."/>
            <person name="Fulton R.S."/>
            <person name="Fulton L.A."/>
            <person name="Pepin K.H."/>
            <person name="Minx P."/>
            <person name="Wagner-McPherson C."/>
            <person name="Layman D."/>
            <person name="Wylie K."/>
            <person name="Sekhon M."/>
            <person name="Becker M.C."/>
            <person name="Fewell G.A."/>
            <person name="Delehaunty K.D."/>
            <person name="Miner T.L."/>
            <person name="Nash W.E."/>
            <person name="Kremitzki C."/>
            <person name="Oddy L."/>
            <person name="Du H."/>
            <person name="Sun H."/>
            <person name="Bradshaw-Cordum H."/>
            <person name="Ali J."/>
            <person name="Carter J."/>
            <person name="Cordes M."/>
            <person name="Harris A."/>
            <person name="Isak A."/>
            <person name="van Brunt A."/>
            <person name="Nguyen C."/>
            <person name="Du F."/>
            <person name="Courtney L."/>
            <person name="Kalicki J."/>
            <person name="Ozersky P."/>
            <person name="Abbott S."/>
            <person name="Armstrong J."/>
            <person name="Belter E.A."/>
            <person name="Caruso L."/>
            <person name="Cedroni M."/>
            <person name="Cotton M."/>
            <person name="Davidson T."/>
            <person name="Desai A."/>
            <person name="Elliott G."/>
            <person name="Erb T."/>
            <person name="Fronick C."/>
            <person name="Gaige T."/>
            <person name="Haakenson W."/>
            <person name="Haglund K."/>
            <person name="Holmes A."/>
            <person name="Harkins R."/>
            <person name="Kim K."/>
            <person name="Kruchowski S.S."/>
            <person name="Strong C.M."/>
            <person name="Grewal N."/>
            <person name="Goyea E."/>
            <person name="Hou S."/>
            <person name="Levy A."/>
            <person name="Martinka S."/>
            <person name="Mead K."/>
            <person name="McLellan M.D."/>
            <person name="Meyer R."/>
            <person name="Randall-Maher J."/>
            <person name="Tomlinson C."/>
            <person name="Dauphin-Kohlberg S."/>
            <person name="Kozlowicz-Reilly A."/>
            <person name="Shah N."/>
            <person name="Swearengen-Shahid S."/>
            <person name="Snider J."/>
            <person name="Strong J.T."/>
            <person name="Thompson J."/>
            <person name="Yoakum M."/>
            <person name="Leonard S."/>
            <person name="Pearman C."/>
            <person name="Trani L."/>
            <person name="Radionenko M."/>
            <person name="Waligorski J.E."/>
            <person name="Wang C."/>
            <person name="Rock S.M."/>
            <person name="Tin-Wollam A.-M."/>
            <person name="Maupin R."/>
            <person name="Latreille P."/>
            <person name="Wendl M.C."/>
            <person name="Yang S.-P."/>
            <person name="Pohl C."/>
            <person name="Wallis J.W."/>
            <person name="Spieth J."/>
            <person name="Bieri T.A."/>
            <person name="Berkowicz N."/>
            <person name="Nelson J.O."/>
            <person name="Osborne J."/>
            <person name="Ding L."/>
            <person name="Meyer R."/>
            <person name="Sabo A."/>
            <person name="Shotland Y."/>
            <person name="Sinha P."/>
            <person name="Wohldmann P.E."/>
            <person name="Cook L.L."/>
            <person name="Hickenbotham M.T."/>
            <person name="Eldred J."/>
            <person name="Williams D."/>
            <person name="Jones T.A."/>
            <person name="She X."/>
            <person name="Ciccarelli F.D."/>
            <person name="Izaurralde E."/>
            <person name="Taylor J."/>
            <person name="Schmutz J."/>
            <person name="Myers R.M."/>
            <person name="Cox D.R."/>
            <person name="Huang X."/>
            <person name="McPherson J.D."/>
            <person name="Mardis E.R."/>
            <person name="Clifton S.W."/>
            <person name="Warren W.C."/>
            <person name="Chinwalla A.T."/>
            <person name="Eddy S.R."/>
            <person name="Marra M.A."/>
            <person name="Ovcharenko I."/>
            <person name="Furey T.S."/>
            <person name="Miller W."/>
            <person name="Eichler E.E."/>
            <person name="Bork P."/>
            <person name="Suyama M."/>
            <person name="Torrents D."/>
            <person name="Waterston R.H."/>
            <person name="Wilson R.K."/>
        </authorList>
    </citation>
    <scope>NUCLEOTIDE SEQUENCE [LARGE SCALE GENOMIC DNA]</scope>
</reference>
<reference key="2">
    <citation type="journal article" date="2004" name="Genome Res.">
        <title>The status, quality, and expansion of the NIH full-length cDNA project: the Mammalian Gene Collection (MGC).</title>
        <authorList>
            <consortium name="The MGC Project Team"/>
        </authorList>
    </citation>
    <scope>NUCLEOTIDE SEQUENCE [LARGE SCALE MRNA] (ISOFORM 2)</scope>
</reference>
<evidence type="ECO:0000250" key="1">
    <source>
        <dbReference type="UniProtKB" id="Q96PS8"/>
    </source>
</evidence>
<evidence type="ECO:0000255" key="2"/>
<evidence type="ECO:0000256" key="3">
    <source>
        <dbReference type="SAM" id="MobiDB-lite"/>
    </source>
</evidence>
<evidence type="ECO:0000303" key="4">
    <source>
    </source>
</evidence>
<evidence type="ECO:0000305" key="5"/>
<evidence type="ECO:0000312" key="6">
    <source>
        <dbReference type="HGNC" id="HGNC:6096"/>
    </source>
</evidence>
<proteinExistence type="evidence at protein level"/>